<dbReference type="EC" id="3.2.1.21"/>
<dbReference type="EMBL" id="L21014">
    <property type="protein sequence ID" value="AAA74233.1"/>
    <property type="status" value="ALT_FRAME"/>
    <property type="molecule type" value="mRNA"/>
</dbReference>
<dbReference type="EMBL" id="AAFI02000197">
    <property type="protein sequence ID" value="EAL60954.1"/>
    <property type="molecule type" value="Genomic_DNA"/>
</dbReference>
<dbReference type="PIR" id="A49881">
    <property type="entry name" value="A49881"/>
</dbReference>
<dbReference type="RefSeq" id="XP_629427.1">
    <property type="nucleotide sequence ID" value="XM_629425.1"/>
</dbReference>
<dbReference type="SMR" id="Q23892"/>
<dbReference type="FunCoup" id="Q23892">
    <property type="interactions" value="54"/>
</dbReference>
<dbReference type="STRING" id="44689.Q23892"/>
<dbReference type="CAZy" id="GH3">
    <property type="family name" value="Glycoside Hydrolase Family 3"/>
</dbReference>
<dbReference type="GlyCosmos" id="Q23892">
    <property type="glycosylation" value="7 sites, No reported glycans"/>
</dbReference>
<dbReference type="GlyGen" id="Q23892">
    <property type="glycosylation" value="7 sites"/>
</dbReference>
<dbReference type="PaxDb" id="44689-DDB0215373"/>
<dbReference type="EnsemblProtists" id="EAL60954">
    <property type="protein sequence ID" value="EAL60954"/>
    <property type="gene ID" value="DDB_G0292810"/>
</dbReference>
<dbReference type="GeneID" id="8628946"/>
<dbReference type="KEGG" id="ddi:DDB_G0292810"/>
<dbReference type="dictyBase" id="DDB_G0292810">
    <property type="gene designation" value="gluA"/>
</dbReference>
<dbReference type="VEuPathDB" id="AmoebaDB:DDB_G0292810"/>
<dbReference type="eggNOG" id="ENOG502QQ55">
    <property type="taxonomic scope" value="Eukaryota"/>
</dbReference>
<dbReference type="HOGENOM" id="CLU_004542_5_1_1"/>
<dbReference type="InParanoid" id="Q23892"/>
<dbReference type="OMA" id="MSAYHSY"/>
<dbReference type="PhylomeDB" id="Q23892"/>
<dbReference type="PRO" id="PR:Q23892"/>
<dbReference type="Proteomes" id="UP000002195">
    <property type="component" value="Chromosome 6"/>
</dbReference>
<dbReference type="GO" id="GO:0005764">
    <property type="term" value="C:lysosome"/>
    <property type="evidence" value="ECO:0000314"/>
    <property type="project" value="dictyBase"/>
</dbReference>
<dbReference type="GO" id="GO:0008422">
    <property type="term" value="F:beta-glucosidase activity"/>
    <property type="evidence" value="ECO:0000315"/>
    <property type="project" value="dictyBase"/>
</dbReference>
<dbReference type="GO" id="GO:0009251">
    <property type="term" value="P:glucan catabolic process"/>
    <property type="evidence" value="ECO:0000318"/>
    <property type="project" value="GO_Central"/>
</dbReference>
<dbReference type="FunFam" id="2.60.40.10:FF:004251">
    <property type="match status" value="1"/>
</dbReference>
<dbReference type="FunFam" id="3.20.20.300:FF:000007">
    <property type="entry name" value="Lysosomal beta glucosidase"/>
    <property type="match status" value="1"/>
</dbReference>
<dbReference type="Gene3D" id="3.40.50.1700">
    <property type="entry name" value="Glycoside hydrolase family 3 C-terminal domain"/>
    <property type="match status" value="1"/>
</dbReference>
<dbReference type="Gene3D" id="3.20.20.300">
    <property type="entry name" value="Glycoside hydrolase, family 3, N-terminal domain"/>
    <property type="match status" value="1"/>
</dbReference>
<dbReference type="Gene3D" id="2.60.40.10">
    <property type="entry name" value="Immunoglobulins"/>
    <property type="match status" value="1"/>
</dbReference>
<dbReference type="InterPro" id="IPR051915">
    <property type="entry name" value="Cellulose_Degrad_GH3"/>
</dbReference>
<dbReference type="InterPro" id="IPR026891">
    <property type="entry name" value="Fn3-like"/>
</dbReference>
<dbReference type="InterPro" id="IPR002772">
    <property type="entry name" value="Glyco_hydro_3_C"/>
</dbReference>
<dbReference type="InterPro" id="IPR036881">
    <property type="entry name" value="Glyco_hydro_3_C_sf"/>
</dbReference>
<dbReference type="InterPro" id="IPR001764">
    <property type="entry name" value="Glyco_hydro_3_N"/>
</dbReference>
<dbReference type="InterPro" id="IPR036962">
    <property type="entry name" value="Glyco_hydro_3_N_sf"/>
</dbReference>
<dbReference type="InterPro" id="IPR017853">
    <property type="entry name" value="Glycoside_hydrolase_SF"/>
</dbReference>
<dbReference type="InterPro" id="IPR013783">
    <property type="entry name" value="Ig-like_fold"/>
</dbReference>
<dbReference type="PANTHER" id="PTHR30620:SF16">
    <property type="entry name" value="LYSOSOMAL BETA GLUCOSIDASE"/>
    <property type="match status" value="1"/>
</dbReference>
<dbReference type="PANTHER" id="PTHR30620">
    <property type="entry name" value="PERIPLASMIC BETA-GLUCOSIDASE-RELATED"/>
    <property type="match status" value="1"/>
</dbReference>
<dbReference type="Pfam" id="PF14310">
    <property type="entry name" value="Fn3-like"/>
    <property type="match status" value="1"/>
</dbReference>
<dbReference type="Pfam" id="PF00933">
    <property type="entry name" value="Glyco_hydro_3"/>
    <property type="match status" value="1"/>
</dbReference>
<dbReference type="Pfam" id="PF01915">
    <property type="entry name" value="Glyco_hydro_3_C"/>
    <property type="match status" value="1"/>
</dbReference>
<dbReference type="PRINTS" id="PR00133">
    <property type="entry name" value="GLHYDRLASE3"/>
</dbReference>
<dbReference type="SMART" id="SM01217">
    <property type="entry name" value="Fn3_like"/>
    <property type="match status" value="1"/>
</dbReference>
<dbReference type="SUPFAM" id="SSF51445">
    <property type="entry name" value="(Trans)glycosidases"/>
    <property type="match status" value="1"/>
</dbReference>
<dbReference type="SUPFAM" id="SSF52279">
    <property type="entry name" value="Beta-D-glucan exohydrolase, C-terminal domain"/>
    <property type="match status" value="1"/>
</dbReference>
<sequence length="821" mass="89344">MKTIKSLFLLSLLIVNLLISSTYGSSIRVSIVGGEEAEVIEKPRTFGNKRELKLEYSQIYPKKQLNQENINFMSARDTFVDNLMSKMSITEKIGQMTQLDITTLTSPNTITINETTLAYYAKTYYIGSYLNSPVSGGLAGDIHHINSSVWLDMINTIQTIVIEGSPNKIPMIYGLDSVHGANYVHKATLFPHNTGLAATFNIEHATTAAQITSKDTVAVGIPWVFAPVLGIGVQPLWSRIYETFGEDPYVASMMGAAAVRGFQGGNNSFDGPINAPSAVCTAKHYFGYSDPTSGKDRTAAWIPERMLRRYFLPSFAEAITGAGAGTIMINSGEVNGVPMHTSYKYLTEVLRGELQFEGVAVTDWQDIEKLVYFHHTAGSAEEAILQALDAGIDMSMVPLDLSFPIILAEMVAAGTVPESRLDLSVRRILNLKYALGLFSNPYPNPNAAIVDTIGQVQDREAAAATAEESITLLQNKNNILPLNTNTIKNVLLTGPSADSIRNLNGGWSVHWQGAYEDSEFPFGTSILTGLREITNDTADFNIQYTIGHEIGVPTNQTSIDEAVELAQSSDVVVVVIGELPEAETPGDIYDLSMDPNEVLLLQQLVDTGKPVVLILVEARPRILPPDLVYSCAAVLMAYLPGSEGGKPIANILMGNVNPSGRLPLTYPGTTGDIGVPYYHKYSENGVTTPLFQFGDGLSYTTFNYTNLACSNCKPISGQSGNYTGVLGQSYTFTVTVTNNGNVQGKDSVLLYLSDLWAQVTPEVKMLRGFQKVDLMPAKSQQISFTLNAYEFSFIGVDNKITLESGQFIIMVGNQQLGLYLQ</sequence>
<comment type="catalytic activity">
    <reaction>
        <text>Hydrolysis of terminal, non-reducing beta-D-glucosyl residues with release of beta-D-glucose.</text>
        <dbReference type="EC" id="3.2.1.21"/>
    </reaction>
</comment>
<comment type="subcellular location">
    <subcellularLocation>
        <location evidence="3">Lysosome</location>
    </subcellularLocation>
</comment>
<comment type="PTM">
    <text evidence="4">Glycosylated. The polyoligosaccharides are of the high-mannose type and are highly substituted with both phosphate and sulfate moieties.</text>
</comment>
<comment type="similarity">
    <text evidence="6">Belongs to the glycosyl hydrolase 3 family.</text>
</comment>
<comment type="caution">
    <text evidence="6">PubMed:8288612 reports 2 different N-termini by direct protein sequencing: mature protein either starts at Ile-70 or Ser-74.</text>
</comment>
<comment type="sequence caution" evidence="6">
    <conflict type="frameshift">
        <sequence resource="EMBL-CDS" id="AAA74233"/>
    </conflict>
</comment>
<feature type="signal peptide" evidence="2">
    <location>
        <begin position="1"/>
        <end position="24"/>
    </location>
</feature>
<feature type="propeptide" id="PRO_0000361523" evidence="5">
    <location>
        <begin position="25"/>
        <end position="69"/>
    </location>
</feature>
<feature type="chain" id="PRO_0000361524" description="Lysosomal beta glucosidase">
    <location>
        <begin position="70"/>
        <end position="821"/>
    </location>
</feature>
<feature type="active site" evidence="1">
    <location>
        <position position="363"/>
    </location>
</feature>
<feature type="glycosylation site" description="N-linked (GlcNAc...) asparagine" evidence="2">
    <location>
        <position position="113"/>
    </location>
</feature>
<feature type="glycosylation site" description="N-linked (GlcNAc...) asparagine" evidence="2">
    <location>
        <position position="146"/>
    </location>
</feature>
<feature type="glycosylation site" description="N-linked (GlcNAc...) asparagine" evidence="2">
    <location>
        <position position="266"/>
    </location>
</feature>
<feature type="glycosylation site" description="N-linked (GlcNAc...) asparagine" evidence="2">
    <location>
        <position position="535"/>
    </location>
</feature>
<feature type="glycosylation site" description="N-linked (GlcNAc...) asparagine" evidence="2">
    <location>
        <position position="555"/>
    </location>
</feature>
<feature type="glycosylation site" description="N-linked (GlcNAc...) asparagine" evidence="2">
    <location>
        <position position="703"/>
    </location>
</feature>
<feature type="glycosylation site" description="N-linked (GlcNAc...) asparagine" evidence="2">
    <location>
        <position position="721"/>
    </location>
</feature>
<feature type="sequence conflict" description="In Ref. 1; AAA74233." evidence="6" ref="1">
    <original>D</original>
    <variation>N</variation>
    <location>
        <position position="290"/>
    </location>
</feature>
<feature type="sequence conflict" description="In Ref. 1; AAA74233." evidence="6" ref="1">
    <original>QN</original>
    <variation>LF</variation>
    <location>
        <begin position="474"/>
        <end position="475"/>
    </location>
</feature>
<feature type="sequence conflict" description="In Ref. 1; AAA74233." evidence="6" ref="1">
    <location>
        <position position="725"/>
    </location>
</feature>
<feature type="sequence conflict" description="In Ref. 1; AAA74233." evidence="6" ref="1">
    <original>T</original>
    <variation>TVT</variation>
    <location>
        <position position="737"/>
    </location>
</feature>
<feature type="sequence conflict" description="In Ref. 1; AAA74233." evidence="6" ref="1">
    <original>Q</original>
    <variation>P</variation>
    <location>
        <position position="806"/>
    </location>
</feature>
<keyword id="KW-0903">Direct protein sequencing</keyword>
<keyword id="KW-0325">Glycoprotein</keyword>
<keyword id="KW-0326">Glycosidase</keyword>
<keyword id="KW-0378">Hydrolase</keyword>
<keyword id="KW-0458">Lysosome</keyword>
<keyword id="KW-1185">Reference proteome</keyword>
<keyword id="KW-0732">Signal</keyword>
<organism>
    <name type="scientific">Dictyostelium discoideum</name>
    <name type="common">Social amoeba</name>
    <dbReference type="NCBI Taxonomy" id="44689"/>
    <lineage>
        <taxon>Eukaryota</taxon>
        <taxon>Amoebozoa</taxon>
        <taxon>Evosea</taxon>
        <taxon>Eumycetozoa</taxon>
        <taxon>Dictyostelia</taxon>
        <taxon>Dictyosteliales</taxon>
        <taxon>Dictyosteliaceae</taxon>
        <taxon>Dictyostelium</taxon>
    </lineage>
</organism>
<reference key="1">
    <citation type="journal article" date="1994" name="J. Biol. Chem.">
        <title>Molecular cloning and characterization of the full-length cDNA encoding the developmentally regulated lysosomal enzyme beta-glucosidase in Dictyostelium discoideum.</title>
        <authorList>
            <person name="Bush J."/>
            <person name="Richardson J."/>
            <person name="Cardelli J."/>
        </authorList>
    </citation>
    <scope>NUCLEOTIDE SEQUENCE [MRNA]</scope>
    <scope>PROTEIN SEQUENCE OF 70-78; 74-82; 204-213 AND 583-592</scope>
    <scope>DEVELOPMENTAL STAGE</scope>
    <source>
        <strain>AX3</strain>
    </source>
</reference>
<reference key="2">
    <citation type="journal article" date="2005" name="Nature">
        <title>The genome of the social amoeba Dictyostelium discoideum.</title>
        <authorList>
            <person name="Eichinger L."/>
            <person name="Pachebat J.A."/>
            <person name="Gloeckner G."/>
            <person name="Rajandream M.A."/>
            <person name="Sucgang R."/>
            <person name="Berriman M."/>
            <person name="Song J."/>
            <person name="Olsen R."/>
            <person name="Szafranski K."/>
            <person name="Xu Q."/>
            <person name="Tunggal B."/>
            <person name="Kummerfeld S."/>
            <person name="Madera M."/>
            <person name="Konfortov B.A."/>
            <person name="Rivero F."/>
            <person name="Bankier A.T."/>
            <person name="Lehmann R."/>
            <person name="Hamlin N."/>
            <person name="Davies R."/>
            <person name="Gaudet P."/>
            <person name="Fey P."/>
            <person name="Pilcher K."/>
            <person name="Chen G."/>
            <person name="Saunders D."/>
            <person name="Sodergren E.J."/>
            <person name="Davis P."/>
            <person name="Kerhornou A."/>
            <person name="Nie X."/>
            <person name="Hall N."/>
            <person name="Anjard C."/>
            <person name="Hemphill L."/>
            <person name="Bason N."/>
            <person name="Farbrother P."/>
            <person name="Desany B."/>
            <person name="Just E."/>
            <person name="Morio T."/>
            <person name="Rost R."/>
            <person name="Churcher C.M."/>
            <person name="Cooper J."/>
            <person name="Haydock S."/>
            <person name="van Driessche N."/>
            <person name="Cronin A."/>
            <person name="Goodhead I."/>
            <person name="Muzny D.M."/>
            <person name="Mourier T."/>
            <person name="Pain A."/>
            <person name="Lu M."/>
            <person name="Harper D."/>
            <person name="Lindsay R."/>
            <person name="Hauser H."/>
            <person name="James K.D."/>
            <person name="Quiles M."/>
            <person name="Madan Babu M."/>
            <person name="Saito T."/>
            <person name="Buchrieser C."/>
            <person name="Wardroper A."/>
            <person name="Felder M."/>
            <person name="Thangavelu M."/>
            <person name="Johnson D."/>
            <person name="Knights A."/>
            <person name="Loulseged H."/>
            <person name="Mungall K.L."/>
            <person name="Oliver K."/>
            <person name="Price C."/>
            <person name="Quail M.A."/>
            <person name="Urushihara H."/>
            <person name="Hernandez J."/>
            <person name="Rabbinowitsch E."/>
            <person name="Steffen D."/>
            <person name="Sanders M."/>
            <person name="Ma J."/>
            <person name="Kohara Y."/>
            <person name="Sharp S."/>
            <person name="Simmonds M.N."/>
            <person name="Spiegler S."/>
            <person name="Tivey A."/>
            <person name="Sugano S."/>
            <person name="White B."/>
            <person name="Walker D."/>
            <person name="Woodward J.R."/>
            <person name="Winckler T."/>
            <person name="Tanaka Y."/>
            <person name="Shaulsky G."/>
            <person name="Schleicher M."/>
            <person name="Weinstock G.M."/>
            <person name="Rosenthal A."/>
            <person name="Cox E.C."/>
            <person name="Chisholm R.L."/>
            <person name="Gibbs R.A."/>
            <person name="Loomis W.F."/>
            <person name="Platzer M."/>
            <person name="Kay R.R."/>
            <person name="Williams J.G."/>
            <person name="Dear P.H."/>
            <person name="Noegel A.A."/>
            <person name="Barrell B.G."/>
            <person name="Kuspa A."/>
        </authorList>
    </citation>
    <scope>NUCLEOTIDE SEQUENCE [LARGE SCALE GENOMIC DNA]</scope>
    <source>
        <strain>AX4</strain>
    </source>
</reference>
<reference key="3">
    <citation type="journal article" date="1983" name="J. Biol. Chem.">
        <title>Structural analysis of the asparagine-linked oligosaccharides from three lysosomal enzymes of Dictyostelium discoideum. Evidence for an unusual acid-stable phosphodiester.</title>
        <authorList>
            <person name="Freeze H.H."/>
            <person name="Yeh R."/>
            <person name="Miller A.L."/>
            <person name="Kornfeld S."/>
        </authorList>
    </citation>
    <scope>GLYCOSYLATION</scope>
</reference>
<reference key="4">
    <citation type="journal article" date="1986" name="J. Cell Biol.">
        <title>Lysosomal enzymes in Dictyostelium discoideum are transported to lysosomes at distinctly different rates.</title>
        <authorList>
            <person name="Cardelli J.A."/>
            <person name="Golumbeski G.S."/>
            <person name="Dimond R.L."/>
        </authorList>
    </citation>
    <scope>SUBCELLULAR LOCATION</scope>
</reference>
<name>GLUA_DICDI</name>
<proteinExistence type="evidence at protein level"/>
<evidence type="ECO:0000250" key="1"/>
<evidence type="ECO:0000255" key="2"/>
<evidence type="ECO:0000269" key="3">
    <source>
    </source>
</evidence>
<evidence type="ECO:0000269" key="4">
    <source>
    </source>
</evidence>
<evidence type="ECO:0000269" key="5">
    <source>
    </source>
</evidence>
<evidence type="ECO:0000305" key="6"/>
<protein>
    <recommendedName>
        <fullName>Lysosomal beta glucosidase</fullName>
        <ecNumber>3.2.1.21</ecNumber>
    </recommendedName>
</protein>
<accession>Q23892</accession>
<accession>Q54CI9</accession>
<gene>
    <name type="primary">gluA</name>
    <name type="ORF">DDB_G0292810</name>
</gene>